<protein>
    <recommendedName>
        <fullName evidence="1">Large ribosomal subunit protein uL14</fullName>
    </recommendedName>
    <alternativeName>
        <fullName evidence="2">50S ribosomal protein L14</fullName>
    </alternativeName>
</protein>
<name>RL14_CAMJE</name>
<gene>
    <name evidence="1" type="primary">rplN</name>
    <name type="ordered locus">Cj1697c</name>
</gene>
<accession>Q0P7T4</accession>
<comment type="function">
    <text evidence="1">Binds to 23S rRNA. Forms part of two intersubunit bridges in the 70S ribosome.</text>
</comment>
<comment type="subunit">
    <text evidence="1">Part of the 50S ribosomal subunit. Forms a cluster with proteins L3 and L19. In the 70S ribosome, L14 and L19 interact and together make contacts with the 16S rRNA in bridges B5 and B8.</text>
</comment>
<comment type="similarity">
    <text evidence="1">Belongs to the universal ribosomal protein uL14 family.</text>
</comment>
<keyword id="KW-1185">Reference proteome</keyword>
<keyword id="KW-0687">Ribonucleoprotein</keyword>
<keyword id="KW-0689">Ribosomal protein</keyword>
<keyword id="KW-0694">RNA-binding</keyword>
<keyword id="KW-0699">rRNA-binding</keyword>
<dbReference type="EMBL" id="AL111168">
    <property type="protein sequence ID" value="CAL35791.1"/>
    <property type="molecule type" value="Genomic_DNA"/>
</dbReference>
<dbReference type="PIR" id="E81267">
    <property type="entry name" value="E81267"/>
</dbReference>
<dbReference type="RefSeq" id="WP_002779438.1">
    <property type="nucleotide sequence ID" value="NZ_SZUC01000002.1"/>
</dbReference>
<dbReference type="RefSeq" id="YP_002345063.1">
    <property type="nucleotide sequence ID" value="NC_002163.1"/>
</dbReference>
<dbReference type="SMR" id="Q0P7T4"/>
<dbReference type="IntAct" id="Q0P7T4">
    <property type="interactions" value="8"/>
</dbReference>
<dbReference type="STRING" id="192222.Cj1697c"/>
<dbReference type="PaxDb" id="192222-Cj1697c"/>
<dbReference type="EnsemblBacteria" id="CAL35791">
    <property type="protein sequence ID" value="CAL35791"/>
    <property type="gene ID" value="Cj1697c"/>
</dbReference>
<dbReference type="GeneID" id="66544933"/>
<dbReference type="GeneID" id="905971"/>
<dbReference type="KEGG" id="cje:Cj1697c"/>
<dbReference type="PATRIC" id="fig|192222.6.peg.1671"/>
<dbReference type="eggNOG" id="COG0093">
    <property type="taxonomic scope" value="Bacteria"/>
</dbReference>
<dbReference type="HOGENOM" id="CLU_095071_2_1_7"/>
<dbReference type="OrthoDB" id="9806379at2"/>
<dbReference type="PRO" id="PR:Q0P7T4"/>
<dbReference type="Proteomes" id="UP000000799">
    <property type="component" value="Chromosome"/>
</dbReference>
<dbReference type="GO" id="GO:0022625">
    <property type="term" value="C:cytosolic large ribosomal subunit"/>
    <property type="evidence" value="ECO:0007669"/>
    <property type="project" value="TreeGrafter"/>
</dbReference>
<dbReference type="GO" id="GO:0070180">
    <property type="term" value="F:large ribosomal subunit rRNA binding"/>
    <property type="evidence" value="ECO:0007669"/>
    <property type="project" value="TreeGrafter"/>
</dbReference>
<dbReference type="GO" id="GO:0003735">
    <property type="term" value="F:structural constituent of ribosome"/>
    <property type="evidence" value="ECO:0007669"/>
    <property type="project" value="InterPro"/>
</dbReference>
<dbReference type="GO" id="GO:0006412">
    <property type="term" value="P:translation"/>
    <property type="evidence" value="ECO:0007669"/>
    <property type="project" value="UniProtKB-UniRule"/>
</dbReference>
<dbReference type="CDD" id="cd00337">
    <property type="entry name" value="Ribosomal_uL14"/>
    <property type="match status" value="1"/>
</dbReference>
<dbReference type="FunFam" id="2.40.150.20:FF:000001">
    <property type="entry name" value="50S ribosomal protein L14"/>
    <property type="match status" value="1"/>
</dbReference>
<dbReference type="Gene3D" id="2.40.150.20">
    <property type="entry name" value="Ribosomal protein L14"/>
    <property type="match status" value="1"/>
</dbReference>
<dbReference type="HAMAP" id="MF_01367">
    <property type="entry name" value="Ribosomal_uL14"/>
    <property type="match status" value="1"/>
</dbReference>
<dbReference type="InterPro" id="IPR000218">
    <property type="entry name" value="Ribosomal_uL14"/>
</dbReference>
<dbReference type="InterPro" id="IPR005745">
    <property type="entry name" value="Ribosomal_uL14_bac-type"/>
</dbReference>
<dbReference type="InterPro" id="IPR019972">
    <property type="entry name" value="Ribosomal_uL14_CS"/>
</dbReference>
<dbReference type="InterPro" id="IPR036853">
    <property type="entry name" value="Ribosomal_uL14_sf"/>
</dbReference>
<dbReference type="NCBIfam" id="TIGR01067">
    <property type="entry name" value="rplN_bact"/>
    <property type="match status" value="1"/>
</dbReference>
<dbReference type="PANTHER" id="PTHR11761">
    <property type="entry name" value="50S/60S RIBOSOMAL PROTEIN L14/L23"/>
    <property type="match status" value="1"/>
</dbReference>
<dbReference type="PANTHER" id="PTHR11761:SF3">
    <property type="entry name" value="LARGE RIBOSOMAL SUBUNIT PROTEIN UL14M"/>
    <property type="match status" value="1"/>
</dbReference>
<dbReference type="Pfam" id="PF00238">
    <property type="entry name" value="Ribosomal_L14"/>
    <property type="match status" value="1"/>
</dbReference>
<dbReference type="SMART" id="SM01374">
    <property type="entry name" value="Ribosomal_L14"/>
    <property type="match status" value="1"/>
</dbReference>
<dbReference type="SUPFAM" id="SSF50193">
    <property type="entry name" value="Ribosomal protein L14"/>
    <property type="match status" value="1"/>
</dbReference>
<dbReference type="PROSITE" id="PS00049">
    <property type="entry name" value="RIBOSOMAL_L14"/>
    <property type="match status" value="1"/>
</dbReference>
<evidence type="ECO:0000255" key="1">
    <source>
        <dbReference type="HAMAP-Rule" id="MF_01367"/>
    </source>
</evidence>
<evidence type="ECO:0000305" key="2"/>
<reference key="1">
    <citation type="journal article" date="2000" name="Nature">
        <title>The genome sequence of the food-borne pathogen Campylobacter jejuni reveals hypervariable sequences.</title>
        <authorList>
            <person name="Parkhill J."/>
            <person name="Wren B.W."/>
            <person name="Mungall K.L."/>
            <person name="Ketley J.M."/>
            <person name="Churcher C.M."/>
            <person name="Basham D."/>
            <person name="Chillingworth T."/>
            <person name="Davies R.M."/>
            <person name="Feltwell T."/>
            <person name="Holroyd S."/>
            <person name="Jagels K."/>
            <person name="Karlyshev A.V."/>
            <person name="Moule S."/>
            <person name="Pallen M.J."/>
            <person name="Penn C.W."/>
            <person name="Quail M.A."/>
            <person name="Rajandream M.A."/>
            <person name="Rutherford K.M."/>
            <person name="van Vliet A.H.M."/>
            <person name="Whitehead S."/>
            <person name="Barrell B.G."/>
        </authorList>
    </citation>
    <scope>NUCLEOTIDE SEQUENCE [LARGE SCALE GENOMIC DNA]</scope>
    <source>
        <strain>ATCC 700819 / NCTC 11168</strain>
    </source>
</reference>
<sequence>MIQSFTRLAVADNSGAKELMCIKVLGGSKRRYATVGDVIVASVKKALPNGKVKKGQVVKAVIVRTKKEIHRDNGSLIRFDENAAVILDNKREPIGTRIFGPVGREVRYGGFMKIVSLAPEVL</sequence>
<feature type="chain" id="PRO_1000055545" description="Large ribosomal subunit protein uL14">
    <location>
        <begin position="1"/>
        <end position="122"/>
    </location>
</feature>
<organism>
    <name type="scientific">Campylobacter jejuni subsp. jejuni serotype O:2 (strain ATCC 700819 / NCTC 11168)</name>
    <dbReference type="NCBI Taxonomy" id="192222"/>
    <lineage>
        <taxon>Bacteria</taxon>
        <taxon>Pseudomonadati</taxon>
        <taxon>Campylobacterota</taxon>
        <taxon>Epsilonproteobacteria</taxon>
        <taxon>Campylobacterales</taxon>
        <taxon>Campylobacteraceae</taxon>
        <taxon>Campylobacter</taxon>
    </lineage>
</organism>
<proteinExistence type="inferred from homology"/>